<evidence type="ECO:0000250" key="1"/>
<evidence type="ECO:0000250" key="2">
    <source>
        <dbReference type="UniProtKB" id="Q9Y2U8"/>
    </source>
</evidence>
<evidence type="ECO:0000255" key="3"/>
<evidence type="ECO:0000255" key="4">
    <source>
        <dbReference type="PROSITE-ProRule" id="PRU00313"/>
    </source>
</evidence>
<evidence type="ECO:0000256" key="5">
    <source>
        <dbReference type="SAM" id="MobiDB-lite"/>
    </source>
</evidence>
<evidence type="ECO:0000303" key="6">
    <source>
    </source>
</evidence>
<evidence type="ECO:0000305" key="7"/>
<evidence type="ECO:0007744" key="8">
    <source>
    </source>
</evidence>
<proteinExistence type="evidence at protein level"/>
<protein>
    <recommendedName>
        <fullName>Inner nuclear membrane protein Man1</fullName>
    </recommendedName>
    <alternativeName>
        <fullName>LEM domain-containing protein 3</fullName>
    </alternativeName>
</protein>
<comment type="function">
    <text evidence="1">Can function as a specific repressor of TGF-beta, activin, and BMP signaling through its interaction with the R-SMAD proteins. Antagonizes TGF-beta-induced cell proliferation arrest (By similarity).</text>
</comment>
<comment type="subunit">
    <text evidence="1">Interacts with SMAD1, SMAD2, SMAD3 and SMAD5. Binds to both phosphorylated and unphosphorylated R-SMADS (By similarity).</text>
</comment>
<comment type="subcellular location">
    <subcellularLocation>
        <location>Nucleus inner membrane</location>
        <topology>Multi-pass membrane protein</topology>
    </subcellularLocation>
</comment>
<comment type="alternative products">
    <event type="alternative splicing"/>
    <isoform>
        <id>Q9WU40-1</id>
        <name>1</name>
        <sequence type="displayed"/>
    </isoform>
    <isoform>
        <id>Q9WU40-2</id>
        <name>2</name>
        <sequence type="described" ref="VSP_026782"/>
    </isoform>
</comment>
<comment type="sequence caution" evidence="7">
    <conflict type="frameshift">
        <sequence resource="EMBL" id="BC082610"/>
    </conflict>
</comment>
<dbReference type="EMBL" id="AC140381">
    <property type="status" value="NOT_ANNOTATED_CDS"/>
    <property type="molecule type" value="Genomic_DNA"/>
</dbReference>
<dbReference type="EMBL" id="AF112300">
    <property type="protein sequence ID" value="AAD31594.1"/>
    <property type="molecule type" value="mRNA"/>
</dbReference>
<dbReference type="EMBL" id="BC082610">
    <property type="status" value="NOT_ANNOTATED_CDS"/>
    <property type="molecule type" value="mRNA"/>
</dbReference>
<dbReference type="EMBL" id="AK140538">
    <property type="protein sequence ID" value="BAE24418.1"/>
    <property type="molecule type" value="mRNA"/>
</dbReference>
<dbReference type="RefSeq" id="NP_001074662.2">
    <property type="nucleotide sequence ID" value="NM_001081193.2"/>
</dbReference>
<dbReference type="SMR" id="Q9WU40"/>
<dbReference type="BioGRID" id="237587">
    <property type="interactions" value="8"/>
</dbReference>
<dbReference type="FunCoup" id="Q9WU40">
    <property type="interactions" value="3185"/>
</dbReference>
<dbReference type="IntAct" id="Q9WU40">
    <property type="interactions" value="1"/>
</dbReference>
<dbReference type="MINT" id="Q9WU40"/>
<dbReference type="STRING" id="10090.ENSMUSP00000113103"/>
<dbReference type="GlyGen" id="Q9WU40">
    <property type="glycosylation" value="6 sites, 1 N-linked glycan (1 site), 1 O-linked glycan (5 sites)"/>
</dbReference>
<dbReference type="iPTMnet" id="Q9WU40"/>
<dbReference type="PhosphoSitePlus" id="Q9WU40"/>
<dbReference type="SwissPalm" id="Q9WU40"/>
<dbReference type="jPOST" id="Q9WU40"/>
<dbReference type="PaxDb" id="10090-ENSMUSP00000113103"/>
<dbReference type="ProteomicsDB" id="287305">
    <molecule id="Q9WU40-1"/>
</dbReference>
<dbReference type="ProteomicsDB" id="287306">
    <molecule id="Q9WU40-2"/>
</dbReference>
<dbReference type="Pumba" id="Q9WU40"/>
<dbReference type="GeneID" id="380664"/>
<dbReference type="KEGG" id="mmu:380664"/>
<dbReference type="AGR" id="MGI:3580376"/>
<dbReference type="CTD" id="23592"/>
<dbReference type="MGI" id="MGI:3580376">
    <property type="gene designation" value="Lemd3"/>
</dbReference>
<dbReference type="eggNOG" id="KOG0147">
    <property type="taxonomic scope" value="Eukaryota"/>
</dbReference>
<dbReference type="InParanoid" id="Q9WU40"/>
<dbReference type="OrthoDB" id="74569at9989"/>
<dbReference type="BioGRID-ORCS" id="380664">
    <property type="hits" value="2 hits in 78 CRISPR screens"/>
</dbReference>
<dbReference type="ChiTaRS" id="Lemd3">
    <property type="organism name" value="mouse"/>
</dbReference>
<dbReference type="PRO" id="PR:Q9WU40"/>
<dbReference type="Proteomes" id="UP000000589">
    <property type="component" value="Unplaced"/>
</dbReference>
<dbReference type="RNAct" id="Q9WU40">
    <property type="molecule type" value="protein"/>
</dbReference>
<dbReference type="GO" id="GO:0016020">
    <property type="term" value="C:membrane"/>
    <property type="evidence" value="ECO:0000266"/>
    <property type="project" value="MGI"/>
</dbReference>
<dbReference type="GO" id="GO:0005635">
    <property type="term" value="C:nuclear envelope"/>
    <property type="evidence" value="ECO:0000314"/>
    <property type="project" value="MGI"/>
</dbReference>
<dbReference type="GO" id="GO:0005637">
    <property type="term" value="C:nuclear inner membrane"/>
    <property type="evidence" value="ECO:0007669"/>
    <property type="project" value="UniProtKB-SubCell"/>
</dbReference>
<dbReference type="GO" id="GO:0003677">
    <property type="term" value="F:DNA binding"/>
    <property type="evidence" value="ECO:0007669"/>
    <property type="project" value="UniProtKB-KW"/>
</dbReference>
<dbReference type="GO" id="GO:0001525">
    <property type="term" value="P:angiogenesis"/>
    <property type="evidence" value="ECO:0000315"/>
    <property type="project" value="MGI"/>
</dbReference>
<dbReference type="GO" id="GO:0002044">
    <property type="term" value="P:blood vessel endothelial cell migration involved in intussusceptive angiogenesis"/>
    <property type="evidence" value="ECO:0000315"/>
    <property type="project" value="MGI"/>
</dbReference>
<dbReference type="GO" id="GO:0006997">
    <property type="term" value="P:nucleus organization"/>
    <property type="evidence" value="ECO:0000315"/>
    <property type="project" value="MGI"/>
</dbReference>
<dbReference type="GO" id="GO:0051726">
    <property type="term" value="P:regulation of cell cycle"/>
    <property type="evidence" value="ECO:0000315"/>
    <property type="project" value="MGI"/>
</dbReference>
<dbReference type="GO" id="GO:1903053">
    <property type="term" value="P:regulation of extracellular matrix organization"/>
    <property type="evidence" value="ECO:0000315"/>
    <property type="project" value="MGI"/>
</dbReference>
<dbReference type="GO" id="GO:0035914">
    <property type="term" value="P:skeletal muscle cell differentiation"/>
    <property type="evidence" value="ECO:0000315"/>
    <property type="project" value="MGI"/>
</dbReference>
<dbReference type="CDD" id="cd12286">
    <property type="entry name" value="RRM_Man1"/>
    <property type="match status" value="1"/>
</dbReference>
<dbReference type="FunFam" id="3.30.70.330:FF:000176">
    <property type="entry name" value="Inner nuclear membrane protein Man1"/>
    <property type="match status" value="1"/>
</dbReference>
<dbReference type="FunFam" id="1.10.10.1180:FF:000001">
    <property type="entry name" value="inner nuclear membrane protein Man1"/>
    <property type="match status" value="1"/>
</dbReference>
<dbReference type="FunFam" id="1.10.720.40:FF:000001">
    <property type="entry name" value="LEM domain containing 2, isoform CRA_a"/>
    <property type="match status" value="1"/>
</dbReference>
<dbReference type="Gene3D" id="1.10.720.40">
    <property type="match status" value="1"/>
</dbReference>
<dbReference type="Gene3D" id="3.30.70.330">
    <property type="match status" value="1"/>
</dbReference>
<dbReference type="Gene3D" id="1.10.10.1180">
    <property type="entry name" value="MAN1, winged-helix domain"/>
    <property type="match status" value="1"/>
</dbReference>
<dbReference type="InterPro" id="IPR052277">
    <property type="entry name" value="INM_ESCRT-Associated"/>
</dbReference>
<dbReference type="InterPro" id="IPR011015">
    <property type="entry name" value="LEM/LEM-like_dom_sf"/>
</dbReference>
<dbReference type="InterPro" id="IPR003887">
    <property type="entry name" value="LEM_dom"/>
</dbReference>
<dbReference type="InterPro" id="IPR018996">
    <property type="entry name" value="Man1/Src1-like_C"/>
</dbReference>
<dbReference type="InterPro" id="IPR034394">
    <property type="entry name" value="Man1_RRM"/>
</dbReference>
<dbReference type="InterPro" id="IPR041885">
    <property type="entry name" value="MAN1_winged_helix_dom"/>
</dbReference>
<dbReference type="InterPro" id="IPR012677">
    <property type="entry name" value="Nucleotide-bd_a/b_plait_sf"/>
</dbReference>
<dbReference type="InterPro" id="IPR035979">
    <property type="entry name" value="RBD_domain_sf"/>
</dbReference>
<dbReference type="PANTHER" id="PTHR13428:SF10">
    <property type="entry name" value="INNER NUCLEAR MEMBRANE PROTEIN MAN1"/>
    <property type="match status" value="1"/>
</dbReference>
<dbReference type="PANTHER" id="PTHR13428">
    <property type="entry name" value="INNER NUCLEAR MEMBRANE PROTEIN MAN1 LEM DOMAIN CONTAINING PROTEIN"/>
    <property type="match status" value="1"/>
</dbReference>
<dbReference type="Pfam" id="PF03020">
    <property type="entry name" value="LEM"/>
    <property type="match status" value="1"/>
</dbReference>
<dbReference type="Pfam" id="PF09402">
    <property type="entry name" value="MSC"/>
    <property type="match status" value="1"/>
</dbReference>
<dbReference type="SMART" id="SM00540">
    <property type="entry name" value="LEM"/>
    <property type="match status" value="1"/>
</dbReference>
<dbReference type="SUPFAM" id="SSF63451">
    <property type="entry name" value="LEM domain"/>
    <property type="match status" value="1"/>
</dbReference>
<dbReference type="SUPFAM" id="SSF54928">
    <property type="entry name" value="RNA-binding domain, RBD"/>
    <property type="match status" value="1"/>
</dbReference>
<dbReference type="PROSITE" id="PS50954">
    <property type="entry name" value="LEM"/>
    <property type="match status" value="1"/>
</dbReference>
<organism>
    <name type="scientific">Mus musculus</name>
    <name type="common">Mouse</name>
    <dbReference type="NCBI Taxonomy" id="10090"/>
    <lineage>
        <taxon>Eukaryota</taxon>
        <taxon>Metazoa</taxon>
        <taxon>Chordata</taxon>
        <taxon>Craniata</taxon>
        <taxon>Vertebrata</taxon>
        <taxon>Euteleostomi</taxon>
        <taxon>Mammalia</taxon>
        <taxon>Eutheria</taxon>
        <taxon>Euarchontoglires</taxon>
        <taxon>Glires</taxon>
        <taxon>Rodentia</taxon>
        <taxon>Myomorpha</taxon>
        <taxon>Muroidea</taxon>
        <taxon>Muridae</taxon>
        <taxon>Murinae</taxon>
        <taxon>Mus</taxon>
        <taxon>Mus</taxon>
    </lineage>
</organism>
<gene>
    <name type="primary">Lemd3</name>
    <name type="synonym">Man1</name>
</gene>
<feature type="chain" id="PRO_0000206150" description="Inner nuclear membrane protein Man1">
    <location>
        <begin position="1"/>
        <end position="921"/>
    </location>
</feature>
<feature type="transmembrane region" description="Helical" evidence="3">
    <location>
        <begin position="486"/>
        <end position="506"/>
    </location>
</feature>
<feature type="transmembrane region" description="Helical" evidence="3">
    <location>
        <begin position="637"/>
        <end position="657"/>
    </location>
</feature>
<feature type="domain" description="LEM" evidence="4">
    <location>
        <begin position="7"/>
        <end position="51"/>
    </location>
</feature>
<feature type="DNA-binding region" evidence="1">
    <location>
        <begin position="717"/>
        <end position="736"/>
    </location>
</feature>
<feature type="region of interest" description="Disordered" evidence="5">
    <location>
        <begin position="47"/>
        <end position="97"/>
    </location>
</feature>
<feature type="region of interest" description="Disordered" evidence="5">
    <location>
        <begin position="136"/>
        <end position="357"/>
    </location>
</feature>
<feature type="region of interest" description="Disordered" evidence="5">
    <location>
        <begin position="374"/>
        <end position="395"/>
    </location>
</feature>
<feature type="region of interest" description="Interaction with SMAD1, SMAD2, SMAD3 and SMAD5" evidence="1">
    <location>
        <begin position="709"/>
        <end position="921"/>
    </location>
</feature>
<feature type="compositionally biased region" description="Low complexity" evidence="5">
    <location>
        <begin position="53"/>
        <end position="62"/>
    </location>
</feature>
<feature type="compositionally biased region" description="Low complexity" evidence="5">
    <location>
        <begin position="72"/>
        <end position="85"/>
    </location>
</feature>
<feature type="compositionally biased region" description="Acidic residues" evidence="5">
    <location>
        <begin position="217"/>
        <end position="237"/>
    </location>
</feature>
<feature type="compositionally biased region" description="Acidic residues" evidence="5">
    <location>
        <begin position="263"/>
        <end position="275"/>
    </location>
</feature>
<feature type="compositionally biased region" description="Polar residues" evidence="5">
    <location>
        <begin position="308"/>
        <end position="317"/>
    </location>
</feature>
<feature type="compositionally biased region" description="Gly residues" evidence="5">
    <location>
        <begin position="348"/>
        <end position="357"/>
    </location>
</feature>
<feature type="modified residue" description="Phosphoserine" evidence="2">
    <location>
        <position position="28"/>
    </location>
</feature>
<feature type="modified residue" description="Phosphoserine" evidence="2">
    <location>
        <position position="136"/>
    </location>
</feature>
<feature type="modified residue" description="Phosphoserine" evidence="2">
    <location>
        <position position="137"/>
    </location>
</feature>
<feature type="modified residue" description="Phosphoserine" evidence="8">
    <location>
        <position position="140"/>
    </location>
</feature>
<feature type="modified residue" description="Phosphoserine" evidence="2">
    <location>
        <position position="261"/>
    </location>
</feature>
<feature type="modified residue" description="Phosphoserine" evidence="8">
    <location>
        <position position="263"/>
    </location>
</feature>
<feature type="modified residue" description="Phosphoserine" evidence="2">
    <location>
        <position position="287"/>
    </location>
</feature>
<feature type="modified residue" description="Phosphoserine" evidence="2">
    <location>
        <position position="412"/>
    </location>
</feature>
<feature type="modified residue" description="Phosphoserine" evidence="2">
    <location>
        <position position="787"/>
    </location>
</feature>
<feature type="modified residue" description="Phosphothreonine" evidence="2">
    <location>
        <position position="893"/>
    </location>
</feature>
<feature type="modified residue" description="Phosphoserine" evidence="2">
    <location>
        <position position="921"/>
    </location>
</feature>
<feature type="splice variant" id="VSP_026782" description="In isoform 2." evidence="6">
    <original>K</original>
    <variation>KVHLVFKITAENLCFKTLSDASN</variation>
    <location>
        <position position="575"/>
    </location>
</feature>
<feature type="sequence conflict" description="In Ref. 4; BAE24418." evidence="7" ref="4">
    <original>P</original>
    <variation>Q</variation>
    <location>
        <position position="804"/>
    </location>
</feature>
<feature type="sequence conflict" description="In Ref. 4; BAE24418." evidence="7" ref="4">
    <original>L</original>
    <variation>F</variation>
    <location>
        <position position="861"/>
    </location>
</feature>
<keyword id="KW-0025">Alternative splicing</keyword>
<keyword id="KW-0238">DNA-binding</keyword>
<keyword id="KW-0472">Membrane</keyword>
<keyword id="KW-0539">Nucleus</keyword>
<keyword id="KW-0597">Phosphoprotein</keyword>
<keyword id="KW-1185">Reference proteome</keyword>
<keyword id="KW-0812">Transmembrane</keyword>
<keyword id="KW-1133">Transmembrane helix</keyword>
<sequence>MAAATAAAAPQQLSDEELFSQLRRYGLSPGPVTESTRPVYLKKLKKLREEEQQQQQQQQQQQHRAGGRGNKTRNSNNNNTATAMGGRPGSGDLAYLRSPAGLGRLSASAAESPVAGGSGGAAAVPAAGSKVLLGFSSDESDVEASPREQAGGGGGGGARRDRAALQYRGLRAPPAPPAAGEVTGGHPGERRKPHSWWGARRPAGPEPQPPAAGSDGAAEDADEELADGEDRDPEAEEPLWASRAVNGSRLLPYSSCREHYSDSEEEEEEGEEDGDVAPARQVLKDDSLARHRPRRSHSKPFSALTAKSGGSRQETSVQGGGALAMNDRAAAAGSLDRSRNLEEAAAEPGGGGGGGCGCDPVDSIPRYRAGAKKLAPLLSPPSPDGDSTLESPTGPLLKTNNHIGGGAFGVDSPGLYANSLPPGATAAAAPGTLRINHANHTGSNHTYLKTAYGKPKLCEPEEELLQQFKREEVSPTGSFSAHYLSMFLLTAACLFFLILGLTYLGMRGTGVPEDGGLIKNPFDETFGKIQESEKNLLMSTLYKLHDRLAQIAGDHECGSSSQRMLSVQEAAAYLKNLGPEYEDVFNTSLLWIFKNGKDVGIRCVGYGPEEDLTNITDVQFLQSTRPQMPFWCRFRRAFITVTHRLLLLCLGVVLVCVALRYMRYRWTKEEEETRQMYDMVVKIIDVLRSHNEACQETKDLQPYMPLPHVRDSLIQPQDRKKMKKVWDRAVDFLAANESRVRTETRRVGGADFLVWRWIQPSASCDKTLVIPSKVWQGQAFHLDRRNSPPNSLTPCLKIRNMFDPVMEIGDHWHLAIQEAILEKCSDNDGIVHIAVDRNSREGCVYVKCLSPEYAGKAFKALHGSWFDGKLVTVKYLRLDRYHHRFPQALTCNTPLKPANKHMNSLSHLRLRTGLANSQGSS</sequence>
<name>MAN1_MOUSE</name>
<accession>Q9WU40</accession>
<accession>Q0VGU6</accession>
<accession>Q3USB5</accession>
<reference key="1">
    <citation type="journal article" date="2009" name="PLoS Biol.">
        <title>Lineage-specific biology revealed by a finished genome assembly of the mouse.</title>
        <authorList>
            <person name="Church D.M."/>
            <person name="Goodstadt L."/>
            <person name="Hillier L.W."/>
            <person name="Zody M.C."/>
            <person name="Goldstein S."/>
            <person name="She X."/>
            <person name="Bult C.J."/>
            <person name="Agarwala R."/>
            <person name="Cherry J.L."/>
            <person name="DiCuccio M."/>
            <person name="Hlavina W."/>
            <person name="Kapustin Y."/>
            <person name="Meric P."/>
            <person name="Maglott D."/>
            <person name="Birtle Z."/>
            <person name="Marques A.C."/>
            <person name="Graves T."/>
            <person name="Zhou S."/>
            <person name="Teague B."/>
            <person name="Potamousis K."/>
            <person name="Churas C."/>
            <person name="Place M."/>
            <person name="Herschleb J."/>
            <person name="Runnheim R."/>
            <person name="Forrest D."/>
            <person name="Amos-Landgraf J."/>
            <person name="Schwartz D.C."/>
            <person name="Cheng Z."/>
            <person name="Lindblad-Toh K."/>
            <person name="Eichler E.E."/>
            <person name="Ponting C.P."/>
        </authorList>
    </citation>
    <scope>NUCLEOTIDE SEQUENCE [LARGE SCALE GENOMIC DNA]</scope>
    <source>
        <strain>C57BL/6J</strain>
    </source>
</reference>
<reference key="2">
    <citation type="journal article" date="2000" name="J. Biol. Chem.">
        <title>MAN1, an inner nuclear membrane protein that shares the LEM domain with lamina-associated polypeptide 2 and emerin.</title>
        <authorList>
            <person name="Lin F."/>
            <person name="Blake D.L."/>
            <person name="Callebaut I."/>
            <person name="Skerjanc I.S."/>
            <person name="Holmer L."/>
            <person name="McBurney M.W."/>
            <person name="Paulin-Levasseur M."/>
            <person name="Worman H.J."/>
        </authorList>
    </citation>
    <scope>NUCLEOTIDE SEQUENCE [MRNA] OF 1-331</scope>
</reference>
<reference key="3">
    <citation type="journal article" date="2004" name="Genome Res.">
        <title>The status, quality, and expansion of the NIH full-length cDNA project: the Mammalian Gene Collection (MGC).</title>
        <authorList>
            <consortium name="The MGC Project Team"/>
        </authorList>
    </citation>
    <scope>NUCLEOTIDE SEQUENCE [LARGE SCALE MRNA] OF 437-921 (ISOFORM 2)</scope>
    <source>
        <strain>C57BL/6J</strain>
        <tissue>Eye</tissue>
    </source>
</reference>
<reference key="4">
    <citation type="journal article" date="2005" name="Science">
        <title>The transcriptional landscape of the mammalian genome.</title>
        <authorList>
            <person name="Carninci P."/>
            <person name="Kasukawa T."/>
            <person name="Katayama S."/>
            <person name="Gough J."/>
            <person name="Frith M.C."/>
            <person name="Maeda N."/>
            <person name="Oyama R."/>
            <person name="Ravasi T."/>
            <person name="Lenhard B."/>
            <person name="Wells C."/>
            <person name="Kodzius R."/>
            <person name="Shimokawa K."/>
            <person name="Bajic V.B."/>
            <person name="Brenner S.E."/>
            <person name="Batalov S."/>
            <person name="Forrest A.R."/>
            <person name="Zavolan M."/>
            <person name="Davis M.J."/>
            <person name="Wilming L.G."/>
            <person name="Aidinis V."/>
            <person name="Allen J.E."/>
            <person name="Ambesi-Impiombato A."/>
            <person name="Apweiler R."/>
            <person name="Aturaliya R.N."/>
            <person name="Bailey T.L."/>
            <person name="Bansal M."/>
            <person name="Baxter L."/>
            <person name="Beisel K.W."/>
            <person name="Bersano T."/>
            <person name="Bono H."/>
            <person name="Chalk A.M."/>
            <person name="Chiu K.P."/>
            <person name="Choudhary V."/>
            <person name="Christoffels A."/>
            <person name="Clutterbuck D.R."/>
            <person name="Crowe M.L."/>
            <person name="Dalla E."/>
            <person name="Dalrymple B.P."/>
            <person name="de Bono B."/>
            <person name="Della Gatta G."/>
            <person name="di Bernardo D."/>
            <person name="Down T."/>
            <person name="Engstrom P."/>
            <person name="Fagiolini M."/>
            <person name="Faulkner G."/>
            <person name="Fletcher C.F."/>
            <person name="Fukushima T."/>
            <person name="Furuno M."/>
            <person name="Futaki S."/>
            <person name="Gariboldi M."/>
            <person name="Georgii-Hemming P."/>
            <person name="Gingeras T.R."/>
            <person name="Gojobori T."/>
            <person name="Green R.E."/>
            <person name="Gustincich S."/>
            <person name="Harbers M."/>
            <person name="Hayashi Y."/>
            <person name="Hensch T.K."/>
            <person name="Hirokawa N."/>
            <person name="Hill D."/>
            <person name="Huminiecki L."/>
            <person name="Iacono M."/>
            <person name="Ikeo K."/>
            <person name="Iwama A."/>
            <person name="Ishikawa T."/>
            <person name="Jakt M."/>
            <person name="Kanapin A."/>
            <person name="Katoh M."/>
            <person name="Kawasawa Y."/>
            <person name="Kelso J."/>
            <person name="Kitamura H."/>
            <person name="Kitano H."/>
            <person name="Kollias G."/>
            <person name="Krishnan S.P."/>
            <person name="Kruger A."/>
            <person name="Kummerfeld S.K."/>
            <person name="Kurochkin I.V."/>
            <person name="Lareau L.F."/>
            <person name="Lazarevic D."/>
            <person name="Lipovich L."/>
            <person name="Liu J."/>
            <person name="Liuni S."/>
            <person name="McWilliam S."/>
            <person name="Madan Babu M."/>
            <person name="Madera M."/>
            <person name="Marchionni L."/>
            <person name="Matsuda H."/>
            <person name="Matsuzawa S."/>
            <person name="Miki H."/>
            <person name="Mignone F."/>
            <person name="Miyake S."/>
            <person name="Morris K."/>
            <person name="Mottagui-Tabar S."/>
            <person name="Mulder N."/>
            <person name="Nakano N."/>
            <person name="Nakauchi H."/>
            <person name="Ng P."/>
            <person name="Nilsson R."/>
            <person name="Nishiguchi S."/>
            <person name="Nishikawa S."/>
            <person name="Nori F."/>
            <person name="Ohara O."/>
            <person name="Okazaki Y."/>
            <person name="Orlando V."/>
            <person name="Pang K.C."/>
            <person name="Pavan W.J."/>
            <person name="Pavesi G."/>
            <person name="Pesole G."/>
            <person name="Petrovsky N."/>
            <person name="Piazza S."/>
            <person name="Reed J."/>
            <person name="Reid J.F."/>
            <person name="Ring B.Z."/>
            <person name="Ringwald M."/>
            <person name="Rost B."/>
            <person name="Ruan Y."/>
            <person name="Salzberg S.L."/>
            <person name="Sandelin A."/>
            <person name="Schneider C."/>
            <person name="Schoenbach C."/>
            <person name="Sekiguchi K."/>
            <person name="Semple C.A."/>
            <person name="Seno S."/>
            <person name="Sessa L."/>
            <person name="Sheng Y."/>
            <person name="Shibata Y."/>
            <person name="Shimada H."/>
            <person name="Shimada K."/>
            <person name="Silva D."/>
            <person name="Sinclair B."/>
            <person name="Sperling S."/>
            <person name="Stupka E."/>
            <person name="Sugiura K."/>
            <person name="Sultana R."/>
            <person name="Takenaka Y."/>
            <person name="Taki K."/>
            <person name="Tammoja K."/>
            <person name="Tan S.L."/>
            <person name="Tang S."/>
            <person name="Taylor M.S."/>
            <person name="Tegner J."/>
            <person name="Teichmann S.A."/>
            <person name="Ueda H.R."/>
            <person name="van Nimwegen E."/>
            <person name="Verardo R."/>
            <person name="Wei C.L."/>
            <person name="Yagi K."/>
            <person name="Yamanishi H."/>
            <person name="Zabarovsky E."/>
            <person name="Zhu S."/>
            <person name="Zimmer A."/>
            <person name="Hide W."/>
            <person name="Bult C."/>
            <person name="Grimmond S.M."/>
            <person name="Teasdale R.D."/>
            <person name="Liu E.T."/>
            <person name="Brusic V."/>
            <person name="Quackenbush J."/>
            <person name="Wahlestedt C."/>
            <person name="Mattick J.S."/>
            <person name="Hume D.A."/>
            <person name="Kai C."/>
            <person name="Sasaki D."/>
            <person name="Tomaru Y."/>
            <person name="Fukuda S."/>
            <person name="Kanamori-Katayama M."/>
            <person name="Suzuki M."/>
            <person name="Aoki J."/>
            <person name="Arakawa T."/>
            <person name="Iida J."/>
            <person name="Imamura K."/>
            <person name="Itoh M."/>
            <person name="Kato T."/>
            <person name="Kawaji H."/>
            <person name="Kawagashira N."/>
            <person name="Kawashima T."/>
            <person name="Kojima M."/>
            <person name="Kondo S."/>
            <person name="Konno H."/>
            <person name="Nakano K."/>
            <person name="Ninomiya N."/>
            <person name="Nishio T."/>
            <person name="Okada M."/>
            <person name="Plessy C."/>
            <person name="Shibata K."/>
            <person name="Shiraki T."/>
            <person name="Suzuki S."/>
            <person name="Tagami M."/>
            <person name="Waki K."/>
            <person name="Watahiki A."/>
            <person name="Okamura-Oho Y."/>
            <person name="Suzuki H."/>
            <person name="Kawai J."/>
            <person name="Hayashizaki Y."/>
        </authorList>
    </citation>
    <scope>NUCLEOTIDE SEQUENCE [LARGE SCALE MRNA] OF 509-921</scope>
    <source>
        <strain>C57BL/6J</strain>
        <tissue>Bone</tissue>
    </source>
</reference>
<reference key="5">
    <citation type="journal article" date="2006" name="Mol. Cell. Proteomics">
        <title>Comprehensive identification of phosphorylation sites in postsynaptic density preparations.</title>
        <authorList>
            <person name="Trinidad J.C."/>
            <person name="Specht C.G."/>
            <person name="Thalhammer A."/>
            <person name="Schoepfer R."/>
            <person name="Burlingame A.L."/>
        </authorList>
    </citation>
    <scope>IDENTIFICATION BY MASS SPECTROMETRY [LARGE SCALE ANALYSIS]</scope>
    <source>
        <tissue>Brain</tissue>
    </source>
</reference>
<reference key="6">
    <citation type="journal article" date="2007" name="Proc. Natl. Acad. Sci. U.S.A.">
        <title>Large-scale phosphorylation analysis of mouse liver.</title>
        <authorList>
            <person name="Villen J."/>
            <person name="Beausoleil S.A."/>
            <person name="Gerber S.A."/>
            <person name="Gygi S.P."/>
        </authorList>
    </citation>
    <scope>IDENTIFICATION BY MASS SPECTROMETRY [LARGE SCALE ANALYSIS]</scope>
    <source>
        <tissue>Liver</tissue>
    </source>
</reference>
<reference key="7">
    <citation type="journal article" date="2010" name="Cell">
        <title>A tissue-specific atlas of mouse protein phosphorylation and expression.</title>
        <authorList>
            <person name="Huttlin E.L."/>
            <person name="Jedrychowski M.P."/>
            <person name="Elias J.E."/>
            <person name="Goswami T."/>
            <person name="Rad R."/>
            <person name="Beausoleil S.A."/>
            <person name="Villen J."/>
            <person name="Haas W."/>
            <person name="Sowa M.E."/>
            <person name="Gygi S.P."/>
        </authorList>
    </citation>
    <scope>PHOSPHORYLATION [LARGE SCALE ANALYSIS] AT SER-140 AND SER-263</scope>
    <scope>IDENTIFICATION BY MASS SPECTROMETRY [LARGE SCALE ANALYSIS]</scope>
    <source>
        <tissue>Brain</tissue>
        <tissue>Heart</tissue>
        <tissue>Kidney</tissue>
        <tissue>Liver</tissue>
        <tissue>Lung</tissue>
        <tissue>Pancreas</tissue>
        <tissue>Spleen</tissue>
        <tissue>Testis</tissue>
    </source>
</reference>